<dbReference type="EC" id="3.4.25.2" evidence="1"/>
<dbReference type="EMBL" id="AE010300">
    <property type="protein sequence ID" value="AAN49545.1"/>
    <property type="molecule type" value="Genomic_DNA"/>
</dbReference>
<dbReference type="RefSeq" id="NP_712527.1">
    <property type="nucleotide sequence ID" value="NC_004342.2"/>
</dbReference>
<dbReference type="RefSeq" id="WP_001114726.1">
    <property type="nucleotide sequence ID" value="NC_004342.2"/>
</dbReference>
<dbReference type="SMR" id="Q8F3Q4"/>
<dbReference type="FunCoup" id="Q8F3Q4">
    <property type="interactions" value="332"/>
</dbReference>
<dbReference type="STRING" id="189518.LA_2346"/>
<dbReference type="MEROPS" id="T01.006"/>
<dbReference type="PaxDb" id="189518-LA_2346"/>
<dbReference type="EnsemblBacteria" id="AAN49545">
    <property type="protein sequence ID" value="AAN49545"/>
    <property type="gene ID" value="LA_2346"/>
</dbReference>
<dbReference type="GeneID" id="61144897"/>
<dbReference type="KEGG" id="lil:LA_2346"/>
<dbReference type="PATRIC" id="fig|189518.3.peg.2330"/>
<dbReference type="HOGENOM" id="CLU_093872_1_0_12"/>
<dbReference type="InParanoid" id="Q8F3Q4"/>
<dbReference type="OrthoDB" id="9804884at2"/>
<dbReference type="Proteomes" id="UP000001408">
    <property type="component" value="Chromosome I"/>
</dbReference>
<dbReference type="GO" id="GO:0005737">
    <property type="term" value="C:cytoplasm"/>
    <property type="evidence" value="ECO:0000318"/>
    <property type="project" value="GO_Central"/>
</dbReference>
<dbReference type="GO" id="GO:0009376">
    <property type="term" value="C:HslUV protease complex"/>
    <property type="evidence" value="ECO:0007669"/>
    <property type="project" value="UniProtKB-UniRule"/>
</dbReference>
<dbReference type="GO" id="GO:0005839">
    <property type="term" value="C:proteasome core complex"/>
    <property type="evidence" value="ECO:0007669"/>
    <property type="project" value="InterPro"/>
</dbReference>
<dbReference type="GO" id="GO:0046872">
    <property type="term" value="F:metal ion binding"/>
    <property type="evidence" value="ECO:0007669"/>
    <property type="project" value="UniProtKB-KW"/>
</dbReference>
<dbReference type="GO" id="GO:0004298">
    <property type="term" value="F:threonine-type endopeptidase activity"/>
    <property type="evidence" value="ECO:0007669"/>
    <property type="project" value="UniProtKB-KW"/>
</dbReference>
<dbReference type="GO" id="GO:0051603">
    <property type="term" value="P:proteolysis involved in protein catabolic process"/>
    <property type="evidence" value="ECO:0000318"/>
    <property type="project" value="GO_Central"/>
</dbReference>
<dbReference type="CDD" id="cd01913">
    <property type="entry name" value="protease_HslV"/>
    <property type="match status" value="1"/>
</dbReference>
<dbReference type="FunFam" id="3.60.20.10:FF:000002">
    <property type="entry name" value="ATP-dependent protease subunit HslV"/>
    <property type="match status" value="1"/>
</dbReference>
<dbReference type="Gene3D" id="3.60.20.10">
    <property type="entry name" value="Glutamine Phosphoribosylpyrophosphate, subunit 1, domain 1"/>
    <property type="match status" value="1"/>
</dbReference>
<dbReference type="HAMAP" id="MF_00248">
    <property type="entry name" value="HslV"/>
    <property type="match status" value="1"/>
</dbReference>
<dbReference type="InterPro" id="IPR022281">
    <property type="entry name" value="ATP-dep_Prtase_HsIV_su"/>
</dbReference>
<dbReference type="InterPro" id="IPR029055">
    <property type="entry name" value="Ntn_hydrolases_N"/>
</dbReference>
<dbReference type="InterPro" id="IPR001353">
    <property type="entry name" value="Proteasome_sua/b"/>
</dbReference>
<dbReference type="InterPro" id="IPR023333">
    <property type="entry name" value="Proteasome_suB-type"/>
</dbReference>
<dbReference type="NCBIfam" id="TIGR03692">
    <property type="entry name" value="ATP_dep_HslV"/>
    <property type="match status" value="1"/>
</dbReference>
<dbReference type="NCBIfam" id="NF003964">
    <property type="entry name" value="PRK05456.1"/>
    <property type="match status" value="1"/>
</dbReference>
<dbReference type="PANTHER" id="PTHR32194:SF0">
    <property type="entry name" value="ATP-DEPENDENT PROTEASE SUBUNIT HSLV"/>
    <property type="match status" value="1"/>
</dbReference>
<dbReference type="PANTHER" id="PTHR32194">
    <property type="entry name" value="METALLOPROTEASE TLDD"/>
    <property type="match status" value="1"/>
</dbReference>
<dbReference type="Pfam" id="PF00227">
    <property type="entry name" value="Proteasome"/>
    <property type="match status" value="1"/>
</dbReference>
<dbReference type="PIRSF" id="PIRSF039093">
    <property type="entry name" value="HslV"/>
    <property type="match status" value="1"/>
</dbReference>
<dbReference type="SUPFAM" id="SSF56235">
    <property type="entry name" value="N-terminal nucleophile aminohydrolases (Ntn hydrolases)"/>
    <property type="match status" value="1"/>
</dbReference>
<dbReference type="PROSITE" id="PS51476">
    <property type="entry name" value="PROTEASOME_BETA_2"/>
    <property type="match status" value="1"/>
</dbReference>
<comment type="function">
    <text evidence="1">Protease subunit of a proteasome-like degradation complex believed to be a general protein degrading machinery.</text>
</comment>
<comment type="catalytic activity">
    <reaction evidence="1">
        <text>ATP-dependent cleavage of peptide bonds with broad specificity.</text>
        <dbReference type="EC" id="3.4.25.2"/>
    </reaction>
</comment>
<comment type="activity regulation">
    <text evidence="1">Allosterically activated by HslU binding.</text>
</comment>
<comment type="subunit">
    <text evidence="1">A double ring-shaped homohexamer of HslV is capped on each side by a ring-shaped HslU homohexamer. The assembly of the HslU/HslV complex is dependent on binding of ATP.</text>
</comment>
<comment type="subcellular location">
    <subcellularLocation>
        <location evidence="1">Cytoplasm</location>
    </subcellularLocation>
</comment>
<comment type="similarity">
    <text evidence="1">Belongs to the peptidase T1B family. HslV subfamily.</text>
</comment>
<evidence type="ECO:0000255" key="1">
    <source>
        <dbReference type="HAMAP-Rule" id="MF_00248"/>
    </source>
</evidence>
<feature type="chain" id="PRO_0000148119" description="ATP-dependent protease subunit HslV">
    <location>
        <begin position="1"/>
        <end position="180"/>
    </location>
</feature>
<feature type="active site" evidence="1">
    <location>
        <position position="9"/>
    </location>
</feature>
<feature type="binding site" evidence="1">
    <location>
        <position position="164"/>
    </location>
    <ligand>
        <name>Na(+)</name>
        <dbReference type="ChEBI" id="CHEBI:29101"/>
    </ligand>
</feature>
<feature type="binding site" evidence="1">
    <location>
        <position position="167"/>
    </location>
    <ligand>
        <name>Na(+)</name>
        <dbReference type="ChEBI" id="CHEBI:29101"/>
    </ligand>
</feature>
<feature type="binding site" evidence="1">
    <location>
        <position position="170"/>
    </location>
    <ligand>
        <name>Na(+)</name>
        <dbReference type="ChEBI" id="CHEBI:29101"/>
    </ligand>
</feature>
<keyword id="KW-0021">Allosteric enzyme</keyword>
<keyword id="KW-0963">Cytoplasm</keyword>
<keyword id="KW-0378">Hydrolase</keyword>
<keyword id="KW-0479">Metal-binding</keyword>
<keyword id="KW-0645">Protease</keyword>
<keyword id="KW-1185">Reference proteome</keyword>
<keyword id="KW-0915">Sodium</keyword>
<keyword id="KW-0888">Threonine protease</keyword>
<organism>
    <name type="scientific">Leptospira interrogans serogroup Icterohaemorrhagiae serovar Lai (strain 56601)</name>
    <dbReference type="NCBI Taxonomy" id="189518"/>
    <lineage>
        <taxon>Bacteria</taxon>
        <taxon>Pseudomonadati</taxon>
        <taxon>Spirochaetota</taxon>
        <taxon>Spirochaetia</taxon>
        <taxon>Leptospirales</taxon>
        <taxon>Leptospiraceae</taxon>
        <taxon>Leptospira</taxon>
    </lineage>
</organism>
<sequence length="180" mass="19585">MPENKIRSTTILCVRKNGKVAIGGDGQVSMGNTVMKNTAKKIRRLYDGKILSGFAGSAADAFTLFELFEKKVQEFGGSLSRSAVELAREWRTDRMLRRLEALLIVADKEESFLISGTGDVISPDEGVIAIGSGGNYALAAARALYDHTNLSPKEIVESSMKIAADICIYTNNHITLEEIL</sequence>
<gene>
    <name evidence="1" type="primary">hslV</name>
    <name type="ordered locus">LA_2346</name>
</gene>
<accession>Q8F3Q4</accession>
<proteinExistence type="inferred from homology"/>
<protein>
    <recommendedName>
        <fullName evidence="1">ATP-dependent protease subunit HslV</fullName>
        <ecNumber evidence="1">3.4.25.2</ecNumber>
    </recommendedName>
</protein>
<name>HSLV_LEPIN</name>
<reference key="1">
    <citation type="journal article" date="2003" name="Nature">
        <title>Unique physiological and pathogenic features of Leptospira interrogans revealed by whole-genome sequencing.</title>
        <authorList>
            <person name="Ren S.-X."/>
            <person name="Fu G."/>
            <person name="Jiang X.-G."/>
            <person name="Zeng R."/>
            <person name="Miao Y.-G."/>
            <person name="Xu H."/>
            <person name="Zhang Y.-X."/>
            <person name="Xiong H."/>
            <person name="Lu G."/>
            <person name="Lu L.-F."/>
            <person name="Jiang H.-Q."/>
            <person name="Jia J."/>
            <person name="Tu Y.-F."/>
            <person name="Jiang J.-X."/>
            <person name="Gu W.-Y."/>
            <person name="Zhang Y.-Q."/>
            <person name="Cai Z."/>
            <person name="Sheng H.-H."/>
            <person name="Yin H.-F."/>
            <person name="Zhang Y."/>
            <person name="Zhu G.-F."/>
            <person name="Wan M."/>
            <person name="Huang H.-L."/>
            <person name="Qian Z."/>
            <person name="Wang S.-Y."/>
            <person name="Ma W."/>
            <person name="Yao Z.-J."/>
            <person name="Shen Y."/>
            <person name="Qiang B.-Q."/>
            <person name="Xia Q.-C."/>
            <person name="Guo X.-K."/>
            <person name="Danchin A."/>
            <person name="Saint Girons I."/>
            <person name="Somerville R.L."/>
            <person name="Wen Y.-M."/>
            <person name="Shi M.-H."/>
            <person name="Chen Z."/>
            <person name="Xu J.-G."/>
            <person name="Zhao G.-P."/>
        </authorList>
    </citation>
    <scope>NUCLEOTIDE SEQUENCE [LARGE SCALE GENOMIC DNA]</scope>
    <source>
        <strain>56601</strain>
    </source>
</reference>